<comment type="function">
    <text evidence="1">Component of the fork protection machinery required to protect stalled/damaged replication forks from uncontrolled DNA2-dependent resection. Acts by stabilizing RAD51 at stalled replication forks and protecting RAD51 nucleofilaments from the antirecombinogenic activities of FBH1 and BLM. Does not regulate spindle orientation.</text>
</comment>
<comment type="subunit">
    <text evidence="1">Interacts (via COMPASS-Shg1 domain) with SETD1A at stalled replication forks; this interaction mediates FANCD2-dependent nucleosome remodeling at reversed forks protecting them from nucleolytic degradation.</text>
</comment>
<comment type="subcellular location">
    <subcellularLocation>
        <location evidence="4">Chromosome</location>
    </subcellularLocation>
    <text evidence="1">Localizes at replication forks: following DNA damage, localizes to damaged replication forks undergoing resection.</text>
</comment>
<comment type="alternative products">
    <event type="alternative splicing"/>
    <isoform>
        <id>E9Q6J5-1</id>
        <name>1</name>
        <sequence type="displayed"/>
    </isoform>
    <isoform>
        <id>E9Q6J5-2</id>
        <name>2</name>
        <sequence type="described" ref="VSP_057903"/>
    </isoform>
    <isoform>
        <id>E9Q6J5-3</id>
        <name>3</name>
        <sequence type="described" ref="VSP_057902"/>
    </isoform>
</comment>
<comment type="similarity">
    <text evidence="6">Belongs to the BOD1 family.</text>
</comment>
<comment type="sequence caution" evidence="6">
    <conflict type="erroneous initiation">
        <sequence resource="EMBL-CDS" id="AAB69856"/>
    </conflict>
    <text>Extended N-terminus.</text>
</comment>
<comment type="sequence caution" evidence="6">
    <conflict type="erroneous initiation">
        <sequence resource="EMBL-CDS" id="BAE24214"/>
    </conflict>
    <text>Truncated N-terminus.</text>
</comment>
<comment type="sequence caution" evidence="6">
    <conflict type="erroneous initiation">
        <sequence resource="EMBL-CDS" id="BAE37191"/>
    </conflict>
    <text>Truncated N-terminus.</text>
</comment>
<feature type="chain" id="PRO_0000434111" description="Biorientation of chromosomes in cell division protein 1-like 1">
    <location>
        <begin position="1"/>
        <end position="3032"/>
    </location>
</feature>
<feature type="DNA-binding region" description="A.T hook" evidence="2">
    <location>
        <begin position="2807"/>
        <end position="2819"/>
    </location>
</feature>
<feature type="region of interest" description="Disordered" evidence="3">
    <location>
        <begin position="1"/>
        <end position="48"/>
    </location>
</feature>
<feature type="region of interest" description="Disordered" evidence="3">
    <location>
        <begin position="164"/>
        <end position="195"/>
    </location>
</feature>
<feature type="region of interest" description="Disordered" evidence="3">
    <location>
        <begin position="214"/>
        <end position="397"/>
    </location>
</feature>
<feature type="region of interest" description="Disordered" evidence="3">
    <location>
        <begin position="409"/>
        <end position="465"/>
    </location>
</feature>
<feature type="region of interest" description="Disordered" evidence="3">
    <location>
        <begin position="480"/>
        <end position="1153"/>
    </location>
</feature>
<feature type="region of interest" description="Disordered" evidence="3">
    <location>
        <begin position="1165"/>
        <end position="1296"/>
    </location>
</feature>
<feature type="region of interest" description="Disordered" evidence="3">
    <location>
        <begin position="1309"/>
        <end position="1366"/>
    </location>
</feature>
<feature type="region of interest" description="Disordered" evidence="3">
    <location>
        <begin position="1424"/>
        <end position="1491"/>
    </location>
</feature>
<feature type="region of interest" description="Disordered" evidence="3">
    <location>
        <begin position="1675"/>
        <end position="1701"/>
    </location>
</feature>
<feature type="region of interest" description="Disordered" evidence="3">
    <location>
        <begin position="1740"/>
        <end position="1858"/>
    </location>
</feature>
<feature type="region of interest" description="Disordered" evidence="3">
    <location>
        <begin position="1934"/>
        <end position="1978"/>
    </location>
</feature>
<feature type="region of interest" description="Disordered" evidence="3">
    <location>
        <begin position="2082"/>
        <end position="2101"/>
    </location>
</feature>
<feature type="region of interest" description="Disordered" evidence="3">
    <location>
        <begin position="2303"/>
        <end position="2322"/>
    </location>
</feature>
<feature type="region of interest" description="Disordered" evidence="3">
    <location>
        <begin position="2370"/>
        <end position="2469"/>
    </location>
</feature>
<feature type="region of interest" description="Disordered" evidence="3">
    <location>
        <begin position="2536"/>
        <end position="2559"/>
    </location>
</feature>
<feature type="region of interest" description="Disordered" evidence="3">
    <location>
        <begin position="2575"/>
        <end position="2596"/>
    </location>
</feature>
<feature type="region of interest" description="Disordered" evidence="3">
    <location>
        <begin position="2682"/>
        <end position="3032"/>
    </location>
</feature>
<feature type="compositionally biased region" description="Pro residues" evidence="3">
    <location>
        <begin position="1"/>
        <end position="31"/>
    </location>
</feature>
<feature type="compositionally biased region" description="Gly residues" evidence="3">
    <location>
        <begin position="32"/>
        <end position="46"/>
    </location>
</feature>
<feature type="compositionally biased region" description="Polar residues" evidence="3">
    <location>
        <begin position="234"/>
        <end position="243"/>
    </location>
</feature>
<feature type="compositionally biased region" description="Basic and acidic residues" evidence="3">
    <location>
        <begin position="244"/>
        <end position="261"/>
    </location>
</feature>
<feature type="compositionally biased region" description="Basic and acidic residues" evidence="3">
    <location>
        <begin position="310"/>
        <end position="391"/>
    </location>
</feature>
<feature type="compositionally biased region" description="Acidic residues" evidence="3">
    <location>
        <begin position="416"/>
        <end position="441"/>
    </location>
</feature>
<feature type="compositionally biased region" description="Basic and acidic residues" evidence="3">
    <location>
        <begin position="488"/>
        <end position="503"/>
    </location>
</feature>
<feature type="compositionally biased region" description="Basic and acidic residues" evidence="3">
    <location>
        <begin position="510"/>
        <end position="525"/>
    </location>
</feature>
<feature type="compositionally biased region" description="Basic and acidic residues" evidence="3">
    <location>
        <begin position="547"/>
        <end position="568"/>
    </location>
</feature>
<feature type="compositionally biased region" description="Basic and acidic residues" evidence="3">
    <location>
        <begin position="578"/>
        <end position="653"/>
    </location>
</feature>
<feature type="compositionally biased region" description="Basic and acidic residues" evidence="3">
    <location>
        <begin position="668"/>
        <end position="736"/>
    </location>
</feature>
<feature type="compositionally biased region" description="Basic and acidic residues" evidence="3">
    <location>
        <begin position="743"/>
        <end position="768"/>
    </location>
</feature>
<feature type="compositionally biased region" description="Basic and acidic residues" evidence="3">
    <location>
        <begin position="799"/>
        <end position="846"/>
    </location>
</feature>
<feature type="compositionally biased region" description="Polar residues" evidence="3">
    <location>
        <begin position="848"/>
        <end position="859"/>
    </location>
</feature>
<feature type="compositionally biased region" description="Basic and acidic residues" evidence="3">
    <location>
        <begin position="860"/>
        <end position="872"/>
    </location>
</feature>
<feature type="compositionally biased region" description="Basic and acidic residues" evidence="3">
    <location>
        <begin position="934"/>
        <end position="960"/>
    </location>
</feature>
<feature type="compositionally biased region" description="Basic and acidic residues" evidence="3">
    <location>
        <begin position="978"/>
        <end position="1015"/>
    </location>
</feature>
<feature type="compositionally biased region" description="Basic and acidic residues" evidence="3">
    <location>
        <begin position="1022"/>
        <end position="1069"/>
    </location>
</feature>
<feature type="compositionally biased region" description="Polar residues" evidence="3">
    <location>
        <begin position="1086"/>
        <end position="1096"/>
    </location>
</feature>
<feature type="compositionally biased region" description="Low complexity" evidence="3">
    <location>
        <begin position="1272"/>
        <end position="1286"/>
    </location>
</feature>
<feature type="compositionally biased region" description="Polar residues" evidence="3">
    <location>
        <begin position="1312"/>
        <end position="1329"/>
    </location>
</feature>
<feature type="compositionally biased region" description="Basic and acidic residues" evidence="3">
    <location>
        <begin position="1428"/>
        <end position="1470"/>
    </location>
</feature>
<feature type="compositionally biased region" description="Basic and acidic residues" evidence="3">
    <location>
        <begin position="1479"/>
        <end position="1491"/>
    </location>
</feature>
<feature type="compositionally biased region" description="Basic and acidic residues" evidence="3">
    <location>
        <begin position="1958"/>
        <end position="1970"/>
    </location>
</feature>
<feature type="compositionally biased region" description="Polar residues" evidence="3">
    <location>
        <begin position="2088"/>
        <end position="2097"/>
    </location>
</feature>
<feature type="compositionally biased region" description="Basic and acidic residues" evidence="3">
    <location>
        <begin position="2449"/>
        <end position="2459"/>
    </location>
</feature>
<feature type="compositionally biased region" description="Acidic residues" evidence="3">
    <location>
        <begin position="2692"/>
        <end position="2701"/>
    </location>
</feature>
<feature type="compositionally biased region" description="Acidic residues" evidence="3">
    <location>
        <begin position="2715"/>
        <end position="2725"/>
    </location>
</feature>
<feature type="compositionally biased region" description="Basic and acidic residues" evidence="3">
    <location>
        <begin position="2727"/>
        <end position="2750"/>
    </location>
</feature>
<feature type="compositionally biased region" description="Polar residues" evidence="3">
    <location>
        <begin position="2758"/>
        <end position="2769"/>
    </location>
</feature>
<feature type="compositionally biased region" description="Basic and acidic residues" evidence="3">
    <location>
        <begin position="2782"/>
        <end position="2804"/>
    </location>
</feature>
<feature type="compositionally biased region" description="Basic residues" evidence="3">
    <location>
        <begin position="2805"/>
        <end position="2815"/>
    </location>
</feature>
<feature type="compositionally biased region" description="Basic and acidic residues" evidence="3">
    <location>
        <begin position="2822"/>
        <end position="2832"/>
    </location>
</feature>
<feature type="compositionally biased region" description="Polar residues" evidence="3">
    <location>
        <begin position="2833"/>
        <end position="2843"/>
    </location>
</feature>
<feature type="compositionally biased region" description="Basic and acidic residues" evidence="3">
    <location>
        <begin position="2853"/>
        <end position="2867"/>
    </location>
</feature>
<feature type="compositionally biased region" description="Acidic residues" evidence="3">
    <location>
        <begin position="2919"/>
        <end position="2932"/>
    </location>
</feature>
<feature type="compositionally biased region" description="Basic and acidic residues" evidence="3">
    <location>
        <begin position="2975"/>
        <end position="2987"/>
    </location>
</feature>
<feature type="compositionally biased region" description="Basic and acidic residues" evidence="3">
    <location>
        <begin position="3020"/>
        <end position="3032"/>
    </location>
</feature>
<feature type="modified residue" description="Phosphoserine" evidence="1">
    <location>
        <position position="264"/>
    </location>
</feature>
<feature type="modified residue" description="N6-acetyllysine" evidence="1">
    <location>
        <position position="471"/>
    </location>
</feature>
<feature type="modified residue" description="Phosphoserine" evidence="10">
    <location>
        <position position="480"/>
    </location>
</feature>
<feature type="modified residue" description="Phosphoserine" evidence="9 10">
    <location>
        <position position="482"/>
    </location>
</feature>
<feature type="modified residue" description="N6-acetyllysine" evidence="11">
    <location>
        <position position="534"/>
    </location>
</feature>
<feature type="modified residue" description="Phosphoserine" evidence="1">
    <location>
        <position position="632"/>
    </location>
</feature>
<feature type="modified residue" description="Phosphoserine" evidence="10">
    <location>
        <position position="656"/>
    </location>
</feature>
<feature type="modified residue" description="Phosphothreonine" evidence="10">
    <location>
        <position position="657"/>
    </location>
</feature>
<feature type="modified residue" description="Phosphoserine" evidence="1">
    <location>
        <position position="1071"/>
    </location>
</feature>
<feature type="modified residue" description="Phosphoserine" evidence="1">
    <location>
        <position position="1138"/>
    </location>
</feature>
<feature type="modified residue" description="Phosphoserine" evidence="1">
    <location>
        <position position="1315"/>
    </location>
</feature>
<feature type="modified residue" description="Phosphoserine" evidence="10">
    <location>
        <position position="1364"/>
    </location>
</feature>
<feature type="modified residue" description="Phosphoserine" evidence="10">
    <location>
        <position position="1676"/>
    </location>
</feature>
<feature type="modified residue" description="Phosphoserine" evidence="10">
    <location>
        <position position="1685"/>
    </location>
</feature>
<feature type="modified residue" description="Phosphoserine" evidence="10">
    <location>
        <position position="1989"/>
    </location>
</feature>
<feature type="modified residue" description="Phosphoserine" evidence="9 10">
    <location>
        <position position="2001"/>
    </location>
</feature>
<feature type="modified residue" description="Phosphoserine" evidence="1">
    <location>
        <position position="2092"/>
    </location>
</feature>
<feature type="modified residue" description="Phosphoserine" evidence="1">
    <location>
        <position position="2166"/>
    </location>
</feature>
<feature type="modified residue" description="Phosphoserine" evidence="1">
    <location>
        <position position="2417"/>
    </location>
</feature>
<feature type="modified residue" description="Phosphoserine" evidence="1">
    <location>
        <position position="2443"/>
    </location>
</feature>
<feature type="modified residue" description="Phosphoserine" evidence="10">
    <location>
        <position position="2554"/>
    </location>
</feature>
<feature type="modified residue" description="Phosphoserine" evidence="10">
    <location>
        <position position="2681"/>
    </location>
</feature>
<feature type="modified residue" description="Phosphoserine" evidence="1">
    <location>
        <position position="2840"/>
    </location>
</feature>
<feature type="modified residue" description="Phosphoserine" evidence="10">
    <location>
        <position position="2841"/>
    </location>
</feature>
<feature type="modified residue" description="Phosphoserine" evidence="10">
    <location>
        <position position="2888"/>
    </location>
</feature>
<feature type="modified residue" description="Phosphothreonine" evidence="1">
    <location>
        <position position="2890"/>
    </location>
</feature>
<feature type="modified residue" description="Phosphoserine" evidence="1">
    <location>
        <position position="2892"/>
    </location>
</feature>
<feature type="modified residue" description="Phosphoserine" evidence="1">
    <location>
        <position position="2898"/>
    </location>
</feature>
<feature type="modified residue" description="Phosphoserine" evidence="1">
    <location>
        <position position="2907"/>
    </location>
</feature>
<feature type="modified residue" description="Phosphoserine" evidence="1">
    <location>
        <position position="2920"/>
    </location>
</feature>
<feature type="modified residue" description="Phosphoserine" evidence="1">
    <location>
        <position position="3000"/>
    </location>
</feature>
<feature type="cross-link" description="Glycyl lysine isopeptide (Lys-Gly) (interchain with G-Cter in ubiquitin)" evidence="1">
    <location>
        <position position="2915"/>
    </location>
</feature>
<feature type="cross-link" description="Glycyl lysine isopeptide (Lys-Gly) (interchain with G-Cter in ubiquitin)" evidence="1">
    <location>
        <position position="2916"/>
    </location>
</feature>
<feature type="splice variant" id="VSP_057902" description="In isoform 3.">
    <original>GN</original>
    <variation>VLLGS</variation>
    <location>
        <begin position="2588"/>
        <end position="2589"/>
    </location>
</feature>
<feature type="splice variant" id="VSP_057903" description="In isoform 2.">
    <location>
        <begin position="2947"/>
        <end position="2993"/>
    </location>
</feature>
<feature type="sequence conflict" description="In Ref. 2; BAE24214." evidence="6" ref="2">
    <original>S</original>
    <variation>R</variation>
    <location>
        <position position="864"/>
    </location>
</feature>
<feature type="sequence conflict" description="In Ref. 2; BAE24214." evidence="6" ref="2">
    <original>P</original>
    <variation>H</variation>
    <location>
        <position position="887"/>
    </location>
</feature>
<feature type="sequence conflict" description="In Ref. 3; AAB69856." evidence="6" ref="3">
    <original>DI</original>
    <variation>AL</variation>
    <location>
        <begin position="1811"/>
        <end position="1812"/>
    </location>
</feature>
<feature type="sequence conflict" description="In Ref. 3; AAB69856." evidence="6" ref="3">
    <original>S</original>
    <variation>G</variation>
    <location>
        <position position="2017"/>
    </location>
</feature>
<protein>
    <recommendedName>
        <fullName evidence="6">Biorientation of chromosomes in cell division protein 1-like 1</fullName>
    </recommendedName>
</protein>
<organism>
    <name type="scientific">Mus musculus</name>
    <name type="common">Mouse</name>
    <dbReference type="NCBI Taxonomy" id="10090"/>
    <lineage>
        <taxon>Eukaryota</taxon>
        <taxon>Metazoa</taxon>
        <taxon>Chordata</taxon>
        <taxon>Craniata</taxon>
        <taxon>Vertebrata</taxon>
        <taxon>Euteleostomi</taxon>
        <taxon>Mammalia</taxon>
        <taxon>Eutheria</taxon>
        <taxon>Euarchontoglires</taxon>
        <taxon>Glires</taxon>
        <taxon>Rodentia</taxon>
        <taxon>Myomorpha</taxon>
        <taxon>Muroidea</taxon>
        <taxon>Muridae</taxon>
        <taxon>Murinae</taxon>
        <taxon>Mus</taxon>
        <taxon>Mus</taxon>
    </lineage>
</organism>
<gene>
    <name evidence="8" type="primary">Bod1l</name>
    <name evidence="5" type="synonym">Kiaa1327</name>
</gene>
<name>BD1L1_MOUSE</name>
<dbReference type="EMBL" id="AC102858">
    <property type="status" value="NOT_ANNOTATED_CDS"/>
    <property type="molecule type" value="Genomic_DNA"/>
</dbReference>
<dbReference type="EMBL" id="AC157932">
    <property type="status" value="NOT_ANNOTATED_CDS"/>
    <property type="molecule type" value="Genomic_DNA"/>
</dbReference>
<dbReference type="EMBL" id="AK046296">
    <property type="protein sequence ID" value="BAC32675.1"/>
    <property type="molecule type" value="mRNA"/>
</dbReference>
<dbReference type="EMBL" id="AK079548">
    <property type="protein sequence ID" value="BAC37680.1"/>
    <property type="molecule type" value="mRNA"/>
</dbReference>
<dbReference type="EMBL" id="AK140021">
    <property type="protein sequence ID" value="BAE24214.1"/>
    <property type="status" value="ALT_INIT"/>
    <property type="molecule type" value="mRNA"/>
</dbReference>
<dbReference type="EMBL" id="AK163093">
    <property type="protein sequence ID" value="BAE37191.1"/>
    <property type="status" value="ALT_INIT"/>
    <property type="molecule type" value="mRNA"/>
</dbReference>
<dbReference type="EMBL" id="AF013969">
    <property type="protein sequence ID" value="AAB69856.1"/>
    <property type="status" value="ALT_INIT"/>
    <property type="molecule type" value="mRNA"/>
</dbReference>
<dbReference type="EMBL" id="AK122495">
    <property type="protein sequence ID" value="BAC65777.1"/>
    <property type="molecule type" value="mRNA"/>
</dbReference>
<dbReference type="CCDS" id="CCDS39079.1">
    <molecule id="E9Q6J5-1"/>
</dbReference>
<dbReference type="CCDS" id="CCDS80273.1">
    <molecule id="E9Q6J5-2"/>
</dbReference>
<dbReference type="PIR" id="T03730">
    <property type="entry name" value="T03730"/>
</dbReference>
<dbReference type="RefSeq" id="NP_001074891.1">
    <molecule id="E9Q6J5-1"/>
    <property type="nucleotide sequence ID" value="NM_001081422.3"/>
</dbReference>
<dbReference type="RefSeq" id="NP_001297530.1">
    <molecule id="E9Q6J5-2"/>
    <property type="nucleotide sequence ID" value="NM_001310601.1"/>
</dbReference>
<dbReference type="FunCoup" id="E9Q6J5">
    <property type="interactions" value="3143"/>
</dbReference>
<dbReference type="IntAct" id="E9Q6J5">
    <property type="interactions" value="1"/>
</dbReference>
<dbReference type="MINT" id="E9Q6J5"/>
<dbReference type="STRING" id="10090.ENSMUSP00000058618"/>
<dbReference type="GlyGen" id="E9Q6J5">
    <property type="glycosylation" value="4 sites, 2 N-linked glycans (2 sites), 1 O-linked glycan (1 site)"/>
</dbReference>
<dbReference type="iPTMnet" id="E9Q6J5"/>
<dbReference type="PhosphoSitePlus" id="E9Q6J5"/>
<dbReference type="SwissPalm" id="E9Q6J5"/>
<dbReference type="jPOST" id="E9Q6J5"/>
<dbReference type="PaxDb" id="10090-ENSMUSP00000058618"/>
<dbReference type="PeptideAtlas" id="E9Q6J5"/>
<dbReference type="ProteomicsDB" id="265203">
    <molecule id="E9Q6J5-1"/>
</dbReference>
<dbReference type="ProteomicsDB" id="265204">
    <molecule id="E9Q6J5-2"/>
</dbReference>
<dbReference type="ProteomicsDB" id="265205">
    <molecule id="E9Q6J5-3"/>
</dbReference>
<dbReference type="Pumba" id="E9Q6J5"/>
<dbReference type="Antibodypedia" id="50158">
    <property type="antibodies" value="44 antibodies from 15 providers"/>
</dbReference>
<dbReference type="Ensembl" id="ENSMUST00000050556.11">
    <molecule id="E9Q6J5-1"/>
    <property type="protein sequence ID" value="ENSMUSP00000058618.8"/>
    <property type="gene ID" value="ENSMUSG00000061755.11"/>
</dbReference>
<dbReference type="Ensembl" id="ENSMUST00000202908.2">
    <molecule id="E9Q6J5-2"/>
    <property type="protein sequence ID" value="ENSMUSP00000144359.2"/>
    <property type="gene ID" value="ENSMUSG00000061755.11"/>
</dbReference>
<dbReference type="GeneID" id="665775"/>
<dbReference type="KEGG" id="mmu:665775"/>
<dbReference type="UCSC" id="uc008xhd.3">
    <molecule id="E9Q6J5-1"/>
    <property type="organism name" value="mouse"/>
</dbReference>
<dbReference type="UCSC" id="uc008xhg.1">
    <property type="organism name" value="mouse"/>
</dbReference>
<dbReference type="AGR" id="MGI:2444804"/>
<dbReference type="CTD" id="665775"/>
<dbReference type="MGI" id="MGI:2444804">
    <property type="gene designation" value="Bod1l"/>
</dbReference>
<dbReference type="VEuPathDB" id="HostDB:ENSMUSG00000061755"/>
<dbReference type="eggNOG" id="ENOG502QTHP">
    <property type="taxonomic scope" value="Eukaryota"/>
</dbReference>
<dbReference type="GeneTree" id="ENSGT00940000156198"/>
<dbReference type="HOGENOM" id="CLU_000519_0_0_1"/>
<dbReference type="InParanoid" id="E9Q6J5"/>
<dbReference type="OMA" id="CAESQQP"/>
<dbReference type="OrthoDB" id="7605699at2759"/>
<dbReference type="PhylomeDB" id="E9Q6J5"/>
<dbReference type="TreeFam" id="TF335808"/>
<dbReference type="Reactome" id="R-MMU-9772755">
    <property type="pathway name" value="Formation of WDR5-containing histone-modifying complexes"/>
</dbReference>
<dbReference type="BioGRID-ORCS" id="665775">
    <property type="hits" value="20 hits in 116 CRISPR screens"/>
</dbReference>
<dbReference type="ChiTaRS" id="Bod1l">
    <property type="organism name" value="mouse"/>
</dbReference>
<dbReference type="PRO" id="PR:E9Q6J5"/>
<dbReference type="Proteomes" id="UP000000589">
    <property type="component" value="Chromosome 5"/>
</dbReference>
<dbReference type="RNAct" id="E9Q6J5">
    <property type="molecule type" value="protein"/>
</dbReference>
<dbReference type="Bgee" id="ENSMUSG00000061755">
    <property type="expression patterns" value="Expressed in embryonic post-anal tail and 260 other cell types or tissues"/>
</dbReference>
<dbReference type="GO" id="GO:0005694">
    <property type="term" value="C:chromosome"/>
    <property type="evidence" value="ECO:0007669"/>
    <property type="project" value="UniProtKB-SubCell"/>
</dbReference>
<dbReference type="GO" id="GO:0048188">
    <property type="term" value="C:Set1C/COMPASS complex"/>
    <property type="evidence" value="ECO:0007669"/>
    <property type="project" value="Ensembl"/>
</dbReference>
<dbReference type="GO" id="GO:0003677">
    <property type="term" value="F:DNA binding"/>
    <property type="evidence" value="ECO:0007669"/>
    <property type="project" value="UniProtKB-KW"/>
</dbReference>
<dbReference type="GO" id="GO:0006974">
    <property type="term" value="P:DNA damage response"/>
    <property type="evidence" value="ECO:0000250"/>
    <property type="project" value="UniProtKB"/>
</dbReference>
<dbReference type="GO" id="GO:0006281">
    <property type="term" value="P:DNA repair"/>
    <property type="evidence" value="ECO:0007669"/>
    <property type="project" value="UniProtKB-KW"/>
</dbReference>
<dbReference type="GO" id="GO:0031297">
    <property type="term" value="P:replication fork processing"/>
    <property type="evidence" value="ECO:0000250"/>
    <property type="project" value="UniProtKB"/>
</dbReference>
<dbReference type="InterPro" id="IPR055264">
    <property type="entry name" value="BOD1/SHG1_dom"/>
</dbReference>
<dbReference type="InterPro" id="IPR043244">
    <property type="entry name" value="BOD1L1"/>
</dbReference>
<dbReference type="PANTHER" id="PTHR47391">
    <property type="entry name" value="BIORIENTATION OF CHROMOSOMES IN CELL DIVISION 1 LIKE 1"/>
    <property type="match status" value="1"/>
</dbReference>
<dbReference type="PANTHER" id="PTHR47391:SF1">
    <property type="entry name" value="BIORIENTATION OF CHROMOSOMES IN CELL DIVISION 1 LIKE 1"/>
    <property type="match status" value="1"/>
</dbReference>
<dbReference type="Pfam" id="PF05205">
    <property type="entry name" value="COMPASS-Shg1"/>
    <property type="match status" value="1"/>
</dbReference>
<proteinExistence type="evidence at protein level"/>
<keyword id="KW-0007">Acetylation</keyword>
<keyword id="KW-0025">Alternative splicing</keyword>
<keyword id="KW-0158">Chromosome</keyword>
<keyword id="KW-0227">DNA damage</keyword>
<keyword id="KW-0234">DNA repair</keyword>
<keyword id="KW-0238">DNA-binding</keyword>
<keyword id="KW-1017">Isopeptide bond</keyword>
<keyword id="KW-0597">Phosphoprotein</keyword>
<keyword id="KW-1185">Reference proteome</keyword>
<keyword id="KW-0832">Ubl conjugation</keyword>
<accession>E9Q6J5</accession>
<accession>O35243</accession>
<accession>Q3TR39</accession>
<accession>Q3USW6</accession>
<accession>Q80TF0</accession>
<accession>Q8BHG7</accession>
<reference key="1">
    <citation type="journal article" date="2009" name="PLoS Biol.">
        <title>Lineage-specific biology revealed by a finished genome assembly of the mouse.</title>
        <authorList>
            <person name="Church D.M."/>
            <person name="Goodstadt L."/>
            <person name="Hillier L.W."/>
            <person name="Zody M.C."/>
            <person name="Goldstein S."/>
            <person name="She X."/>
            <person name="Bult C.J."/>
            <person name="Agarwala R."/>
            <person name="Cherry J.L."/>
            <person name="DiCuccio M."/>
            <person name="Hlavina W."/>
            <person name="Kapustin Y."/>
            <person name="Meric P."/>
            <person name="Maglott D."/>
            <person name="Birtle Z."/>
            <person name="Marques A.C."/>
            <person name="Graves T."/>
            <person name="Zhou S."/>
            <person name="Teague B."/>
            <person name="Potamousis K."/>
            <person name="Churas C."/>
            <person name="Place M."/>
            <person name="Herschleb J."/>
            <person name="Runnheim R."/>
            <person name="Forrest D."/>
            <person name="Amos-Landgraf J."/>
            <person name="Schwartz D.C."/>
            <person name="Cheng Z."/>
            <person name="Lindblad-Toh K."/>
            <person name="Eichler E.E."/>
            <person name="Ponting C.P."/>
        </authorList>
    </citation>
    <scope>NUCLEOTIDE SEQUENCE [LARGE SCALE GENOMIC DNA]</scope>
    <source>
        <strain>C57BL/6J</strain>
    </source>
</reference>
<reference key="2">
    <citation type="journal article" date="2005" name="Science">
        <title>The transcriptional landscape of the mammalian genome.</title>
        <authorList>
            <person name="Carninci P."/>
            <person name="Kasukawa T."/>
            <person name="Katayama S."/>
            <person name="Gough J."/>
            <person name="Frith M.C."/>
            <person name="Maeda N."/>
            <person name="Oyama R."/>
            <person name="Ravasi T."/>
            <person name="Lenhard B."/>
            <person name="Wells C."/>
            <person name="Kodzius R."/>
            <person name="Shimokawa K."/>
            <person name="Bajic V.B."/>
            <person name="Brenner S.E."/>
            <person name="Batalov S."/>
            <person name="Forrest A.R."/>
            <person name="Zavolan M."/>
            <person name="Davis M.J."/>
            <person name="Wilming L.G."/>
            <person name="Aidinis V."/>
            <person name="Allen J.E."/>
            <person name="Ambesi-Impiombato A."/>
            <person name="Apweiler R."/>
            <person name="Aturaliya R.N."/>
            <person name="Bailey T.L."/>
            <person name="Bansal M."/>
            <person name="Baxter L."/>
            <person name="Beisel K.W."/>
            <person name="Bersano T."/>
            <person name="Bono H."/>
            <person name="Chalk A.M."/>
            <person name="Chiu K.P."/>
            <person name="Choudhary V."/>
            <person name="Christoffels A."/>
            <person name="Clutterbuck D.R."/>
            <person name="Crowe M.L."/>
            <person name="Dalla E."/>
            <person name="Dalrymple B.P."/>
            <person name="de Bono B."/>
            <person name="Della Gatta G."/>
            <person name="di Bernardo D."/>
            <person name="Down T."/>
            <person name="Engstrom P."/>
            <person name="Fagiolini M."/>
            <person name="Faulkner G."/>
            <person name="Fletcher C.F."/>
            <person name="Fukushima T."/>
            <person name="Furuno M."/>
            <person name="Futaki S."/>
            <person name="Gariboldi M."/>
            <person name="Georgii-Hemming P."/>
            <person name="Gingeras T.R."/>
            <person name="Gojobori T."/>
            <person name="Green R.E."/>
            <person name="Gustincich S."/>
            <person name="Harbers M."/>
            <person name="Hayashi Y."/>
            <person name="Hensch T.K."/>
            <person name="Hirokawa N."/>
            <person name="Hill D."/>
            <person name="Huminiecki L."/>
            <person name="Iacono M."/>
            <person name="Ikeo K."/>
            <person name="Iwama A."/>
            <person name="Ishikawa T."/>
            <person name="Jakt M."/>
            <person name="Kanapin A."/>
            <person name="Katoh M."/>
            <person name="Kawasawa Y."/>
            <person name="Kelso J."/>
            <person name="Kitamura H."/>
            <person name="Kitano H."/>
            <person name="Kollias G."/>
            <person name="Krishnan S.P."/>
            <person name="Kruger A."/>
            <person name="Kummerfeld S.K."/>
            <person name="Kurochkin I.V."/>
            <person name="Lareau L.F."/>
            <person name="Lazarevic D."/>
            <person name="Lipovich L."/>
            <person name="Liu J."/>
            <person name="Liuni S."/>
            <person name="McWilliam S."/>
            <person name="Madan Babu M."/>
            <person name="Madera M."/>
            <person name="Marchionni L."/>
            <person name="Matsuda H."/>
            <person name="Matsuzawa S."/>
            <person name="Miki H."/>
            <person name="Mignone F."/>
            <person name="Miyake S."/>
            <person name="Morris K."/>
            <person name="Mottagui-Tabar S."/>
            <person name="Mulder N."/>
            <person name="Nakano N."/>
            <person name="Nakauchi H."/>
            <person name="Ng P."/>
            <person name="Nilsson R."/>
            <person name="Nishiguchi S."/>
            <person name="Nishikawa S."/>
            <person name="Nori F."/>
            <person name="Ohara O."/>
            <person name="Okazaki Y."/>
            <person name="Orlando V."/>
            <person name="Pang K.C."/>
            <person name="Pavan W.J."/>
            <person name="Pavesi G."/>
            <person name="Pesole G."/>
            <person name="Petrovsky N."/>
            <person name="Piazza S."/>
            <person name="Reed J."/>
            <person name="Reid J.F."/>
            <person name="Ring B.Z."/>
            <person name="Ringwald M."/>
            <person name="Rost B."/>
            <person name="Ruan Y."/>
            <person name="Salzberg S.L."/>
            <person name="Sandelin A."/>
            <person name="Schneider C."/>
            <person name="Schoenbach C."/>
            <person name="Sekiguchi K."/>
            <person name="Semple C.A."/>
            <person name="Seno S."/>
            <person name="Sessa L."/>
            <person name="Sheng Y."/>
            <person name="Shibata Y."/>
            <person name="Shimada H."/>
            <person name="Shimada K."/>
            <person name="Silva D."/>
            <person name="Sinclair B."/>
            <person name="Sperling S."/>
            <person name="Stupka E."/>
            <person name="Sugiura K."/>
            <person name="Sultana R."/>
            <person name="Takenaka Y."/>
            <person name="Taki K."/>
            <person name="Tammoja K."/>
            <person name="Tan S.L."/>
            <person name="Tang S."/>
            <person name="Taylor M.S."/>
            <person name="Tegner J."/>
            <person name="Teichmann S.A."/>
            <person name="Ueda H.R."/>
            <person name="van Nimwegen E."/>
            <person name="Verardo R."/>
            <person name="Wei C.L."/>
            <person name="Yagi K."/>
            <person name="Yamanishi H."/>
            <person name="Zabarovsky E."/>
            <person name="Zhu S."/>
            <person name="Zimmer A."/>
            <person name="Hide W."/>
            <person name="Bult C."/>
            <person name="Grimmond S.M."/>
            <person name="Teasdale R.D."/>
            <person name="Liu E.T."/>
            <person name="Brusic V."/>
            <person name="Quackenbush J."/>
            <person name="Wahlestedt C."/>
            <person name="Mattick J.S."/>
            <person name="Hume D.A."/>
            <person name="Kai C."/>
            <person name="Sasaki D."/>
            <person name="Tomaru Y."/>
            <person name="Fukuda S."/>
            <person name="Kanamori-Katayama M."/>
            <person name="Suzuki M."/>
            <person name="Aoki J."/>
            <person name="Arakawa T."/>
            <person name="Iida J."/>
            <person name="Imamura K."/>
            <person name="Itoh M."/>
            <person name="Kato T."/>
            <person name="Kawaji H."/>
            <person name="Kawagashira N."/>
            <person name="Kawashima T."/>
            <person name="Kojima M."/>
            <person name="Kondo S."/>
            <person name="Konno H."/>
            <person name="Nakano K."/>
            <person name="Ninomiya N."/>
            <person name="Nishio T."/>
            <person name="Okada M."/>
            <person name="Plessy C."/>
            <person name="Shibata K."/>
            <person name="Shiraki T."/>
            <person name="Suzuki S."/>
            <person name="Tagami M."/>
            <person name="Waki K."/>
            <person name="Watahiki A."/>
            <person name="Okamura-Oho Y."/>
            <person name="Suzuki H."/>
            <person name="Kawai J."/>
            <person name="Hayashizaki Y."/>
        </authorList>
    </citation>
    <scope>NUCLEOTIDE SEQUENCE [LARGE SCALE MRNA] OF 1-327; 724-1707 AND 2256-2668</scope>
    <source>
        <strain>C57BL/6J</strain>
        <tissue>Aorta</tissue>
        <tissue>Corpora quadrigemina</tissue>
        <tissue>Hypothalamus</tissue>
        <tissue>Vein</tissue>
    </source>
</reference>
<reference key="3">
    <citation type="journal article" date="1995" name="J. Bone Miner. Res.">
        <title>Monoclonal antibodies recognize antigen expressed by osteoblasts.</title>
        <authorList>
            <person name="Benayahu D."/>
            <person name="Efrati M."/>
            <person name="Wientroub S."/>
        </authorList>
    </citation>
    <scope>NUCLEOTIDE SEQUENCE [MRNA] OF 1466-3032</scope>
</reference>
<reference key="4">
    <citation type="journal article" date="2003" name="DNA Res.">
        <title>Prediction of the coding sequences of mouse homologues of KIAA gene: II. The complete nucleotide sequences of 400 mouse KIAA-homologous cDNAs identified by screening of terminal sequences of cDNA clones randomly sampled from size-fractionated libraries.</title>
        <authorList>
            <person name="Okazaki N."/>
            <person name="Kikuno R."/>
            <person name="Ohara R."/>
            <person name="Inamoto S."/>
            <person name="Aizawa H."/>
            <person name="Yuasa S."/>
            <person name="Nakajima D."/>
            <person name="Nagase T."/>
            <person name="Ohara O."/>
            <person name="Koga H."/>
        </authorList>
    </citation>
    <scope>NUCLEOTIDE SEQUENCE [LARGE SCALE MRNA] OF 1571-2985 (ISOFORM 2)</scope>
    <source>
        <tissue evidence="7">Brain</tissue>
    </source>
</reference>
<reference key="5">
    <citation type="journal article" date="2007" name="Proc. Natl. Acad. Sci. U.S.A.">
        <title>Large-scale phosphorylation analysis of mouse liver.</title>
        <authorList>
            <person name="Villen J."/>
            <person name="Beausoleil S.A."/>
            <person name="Gerber S.A."/>
            <person name="Gygi S.P."/>
        </authorList>
    </citation>
    <scope>PHOSPHORYLATION [LARGE SCALE ANALYSIS] AT SER-482 AND SER-2001</scope>
    <scope>IDENTIFICATION BY MASS SPECTROMETRY [LARGE SCALE ANALYSIS]</scope>
    <source>
        <tissue>Liver</tissue>
    </source>
</reference>
<reference key="6">
    <citation type="journal article" date="2009" name="Mol. Cell. Proteomics">
        <title>Large scale localization of protein phosphorylation by use of electron capture dissociation mass spectrometry.</title>
        <authorList>
            <person name="Sweet S.M."/>
            <person name="Bailey C.M."/>
            <person name="Cunningham D.L."/>
            <person name="Heath J.K."/>
            <person name="Cooper H.J."/>
        </authorList>
    </citation>
    <scope>IDENTIFICATION BY MASS SPECTROMETRY [LARGE SCALE ANALYSIS]</scope>
    <source>
        <tissue>Embryonic fibroblast</tissue>
    </source>
</reference>
<reference key="7">
    <citation type="journal article" date="2010" name="Cell">
        <title>A tissue-specific atlas of mouse protein phosphorylation and expression.</title>
        <authorList>
            <person name="Huttlin E.L."/>
            <person name="Jedrychowski M.P."/>
            <person name="Elias J.E."/>
            <person name="Goswami T."/>
            <person name="Rad R."/>
            <person name="Beausoleil S.A."/>
            <person name="Villen J."/>
            <person name="Haas W."/>
            <person name="Sowa M.E."/>
            <person name="Gygi S.P."/>
        </authorList>
    </citation>
    <scope>PHOSPHORYLATION [LARGE SCALE ANALYSIS] AT SER-480; SER-482; SER-656; THR-657; SER-1364; SER-1676; SER-1685; SER-1989; SER-2001; SER-2554; SER-2681; SER-2841 AND SER-2888</scope>
    <scope>IDENTIFICATION BY MASS SPECTROMETRY [LARGE SCALE ANALYSIS]</scope>
    <source>
        <tissue>Brain</tissue>
        <tissue>Brown adipose tissue</tissue>
        <tissue>Heart</tissue>
        <tissue>Kidney</tissue>
        <tissue>Liver</tissue>
        <tissue>Lung</tissue>
        <tissue>Pancreas</tissue>
        <tissue>Spleen</tissue>
        <tissue>Testis</tissue>
    </source>
</reference>
<reference key="8">
    <citation type="journal article" date="2013" name="Mol. Cell">
        <title>SIRT5-mediated lysine desuccinylation impacts diverse metabolic pathways.</title>
        <authorList>
            <person name="Park J."/>
            <person name="Chen Y."/>
            <person name="Tishkoff D.X."/>
            <person name="Peng C."/>
            <person name="Tan M."/>
            <person name="Dai L."/>
            <person name="Xie Z."/>
            <person name="Zhang Y."/>
            <person name="Zwaans B.M."/>
            <person name="Skinner M.E."/>
            <person name="Lombard D.B."/>
            <person name="Zhao Y."/>
        </authorList>
    </citation>
    <scope>ACETYLATION [LARGE SCALE ANALYSIS] AT LYS-534</scope>
    <scope>IDENTIFICATION BY MASS SPECTROMETRY [LARGE SCALE ANALYSIS]</scope>
    <source>
        <tissue>Embryonic fibroblast</tissue>
    </source>
</reference>
<reference key="9">
    <citation type="journal article" date="2015" name="Mol. Cell">
        <title>BOD1L is required to suppress deleterious resection of stressed replication forks.</title>
        <authorList>
            <person name="Higgs M.R."/>
            <person name="Reynolds J.J."/>
            <person name="Winczura A."/>
            <person name="Blackford A.N."/>
            <person name="Borel V."/>
            <person name="Miller E.S."/>
            <person name="Zlatanou A."/>
            <person name="Nieminuszczy J."/>
            <person name="Ryan E.L."/>
            <person name="Davies N.J."/>
            <person name="Stankovic T."/>
            <person name="Boulton S.J."/>
            <person name="Niedzwiedz W."/>
            <person name="Stewart G.S."/>
        </authorList>
    </citation>
    <scope>SUBCELLULAR LOCATION</scope>
</reference>
<evidence type="ECO:0000250" key="1">
    <source>
        <dbReference type="UniProtKB" id="Q8NFC6"/>
    </source>
</evidence>
<evidence type="ECO:0000255" key="2"/>
<evidence type="ECO:0000256" key="3">
    <source>
        <dbReference type="SAM" id="MobiDB-lite"/>
    </source>
</evidence>
<evidence type="ECO:0000269" key="4">
    <source>
    </source>
</evidence>
<evidence type="ECO:0000303" key="5">
    <source>
    </source>
</evidence>
<evidence type="ECO:0000305" key="6"/>
<evidence type="ECO:0000312" key="7">
    <source>
        <dbReference type="EMBL" id="BAC65777.1"/>
    </source>
</evidence>
<evidence type="ECO:0000312" key="8">
    <source>
        <dbReference type="MGI" id="MGI:2444804"/>
    </source>
</evidence>
<evidence type="ECO:0007744" key="9">
    <source>
    </source>
</evidence>
<evidence type="ECO:0007744" key="10">
    <source>
    </source>
</evidence>
<evidence type="ECO:0007744" key="11">
    <source>
    </source>
</evidence>
<sequence length="3032" mass="327453">MATNPQPQPPPPAPPPPPPQPQPPPPPPGPGAGPGASGPGSAGAGAGDPQLVAMIVNHLKSQGLFDQFRRDCLADVDTKPAYQNLRQRVDNFVANHLATHTWSPHLNKNQLRNNIRQQVLKSGMLESGIDRIISQVVDPKINHTFRPQVEKAVHEFLATLNHKEEAAGSTAPDDEKPESSVITQGAPAPGPSANVASDAMSILETITSLNQEANAARASTEMSNAKVSERTSRKLSSQPSTDVSTDKERGSEDATEREKATSDSGGDGLEAALKSEEPSDLPCPVEETKNHMKENNSLLLLSKDAQQESTDPKIKSMDKGEKKPDGNEKGERKKEKKEKTEKKIDHSKRNEDTQKVKDERQAKDKEVESTKLPSEKSNSRARAAEGTKEDCSLLDSDVDGLTDITVSSVHTSDLSSFEEDTEEEVVVSESMEEGEITSEDEEKNKQNKAKVQPGDSSDGKARGVRHAYVHKPYLYSKYYSDSDDELTVEQRRQSIAKEKEERLLRRRINREKLEEKRKQKAEKTKSSKVKSQGKSTVDLEDSSAKTLEPKAPRIKEVLKERKVLEKKVALSKRRRKDSRNVDENSKKKPQAEEESKEALKTTEYCEKEKASSKDLRHTHGKGEPSRPARRLSESLHSADENKTESKVEREYKRRTSTPVILEGAQEETDTRDGKKQPERSETNVEETQKQKSTLKNEKYQKKDDPETHGKGLPKKEAKSAKERPEKEKAQSEDKPSSKHKHKGDSVHKMSDETELHSSEKGETEESVRKQGQQTKLSSDDRTERKSKHKSERRLSVLGRDGKPVSEYTIKTDEHARKDNKKEKHLSSEKSKAEHKSRRSSDSKLQKDALSSKQHSVTSQKRSESCSEDKCETDSTNADSSFKPEELPHKERRRTKSLLEDKVVSKSKSKGQSKQTKAAETEAQEGVTRQVTTPKPDKEKNTEDNDTERQRKFKLEDRTSEETVTDPALENTVSSAHSAQKDSGHRAKLASIKEKHKTDKDSTSSKLERKVSDGHRSRSLKHSNKDMKKKEENKPDDKNGKEVDSSHEKGRGNGPVTEKKLSRRLCENRRGSTSQEMAKEDKLVANMSGTTSSSSLQRPKKSTETTSIPEQEPMEIDSEAAVENVSELSKTEDISSNSSQQDTDFENVTKHKATAGVLKDEFRTSMVDSKPAAAVTCKSGRGLAVTSISERHADHKSTLTKKVHSQGNPSKAAPREREPIQRGAQEVSVDSEVSRKALSRAPSENEKGQKNLKGMSKTTEECGTHRNASLEYSTDSDLLSSSGSVTVVPQKESHNSNTIPVIDREAISEGGRASTSLANHSDVPNQYSTVKKSEVHKTNGSKEGNDGFTVDMPTKANGGSKRHLSEDSQATLLYSKESKISIPLADKSMSVTGDNKNINKQRSLMGTAKRESDLKVNPDIKQDSAAGEHVVDLSTRKEAETVRRKHNKEIPTDVERKTENSEVDTSARRDSAPVPQQRHGKMERGAAGSGRRDKAFIATSTEGTDKGIMLNTVKTGDATTTSSEVGEKGTALPCTSIEADEGFMMGACPKKHPLQVGAEASECTVFAAAEEGKGVVTEGFAESEILLTSSKEGESGECAVAESEDRVAGPLAAHTVQAEANVNSITTEEKDDAVTSAGSEEKCGGSACTVEGTATFIGEVESDGAVTSAGTEIRAGSLSSEDVDGSQENRIQVGPKKETEGTVTCTETKGRNDNFICLVTRVETQEQRVVTGADVVQVNAAKPQEANANQGDGSGTDGAEGESAVTSTGITEEDGEASANCTGSEDNREGCAISSETEESAESAMDSTEAKDITNAPLVAAGPCDDEGIVTSTGAKEEDDEDEGVVTSTGRGNEPGHASACTGIEESEGMMVCESGEGGAQIGPTIDHVNAEAGAATVNTNDSNVDSMSGAEKEIKDTNICSSAKGIVESSVTSALAGNSDRPPVLCGSEGPMASASSHHSDSQLTRKETVEDTTISTGLVKGSDDVLVSGEVPECEVGHMSPRKNEECDGLMASTASCDVSNKDSLAGSKSQGNGLMISTSTNACTPQISAVIDVRGGHLSTLSTEEIRDGVRVHREGFEAPMPSAVSGENSQLTASRSEEKDECAMISTSIGEEFELPISSAVTVTCAERQQPVAAVEESTTGPALVSTEDFEVPMPSAPTEAESPLASTSKEEKDECALISTSIAEECEASVFGVSRNAPSVTDGNAVISTSSVEDCEGSVSSAVPQESVCPSVIPVEETGDTAMISTSTSEGREAVMVGTIPTDDDQATTVRGEDLSDAAIISTSTAECVLTCTSLSRHEENQQATHNPEGNGGHLATKQSKCELPMPSLVAERNCKCPGPFRMGKGVGPLMAVGTRGEHDRLPVCEPSVGQGQPGTALCLGEEESHGMDCPGQDLNAKERNTLLSSVQRESKSAEAEAAGDSSTARRTVRKDSERNANSLSETNCLREPEQKPAEDTSGSTHCLTAVNPGAEADGMLPITHAALEYPDHQEPESNLKTTTKCITGQESQMPSSHTGVLSAVCHVAPCASEQEGGLPTKSDHSGTWTSEGSPEKMGHVAGARQSFHREGNLDVTLPPEDNGCGVGNEESPPKGIGGLELSTGLTTEISVSSEEDTSHGVVAAPENPCVGRRRGAAELQMEALLMRESLNVEKSESRINEEIHFESQNKEEICCGRKGSTEALSGCSVEADPEEVEEEEKQISQRNRKPDYSSSEEELDDSPDVLDSRIETAQRQYSETEPHDTKEENSGDVEEFSSVTSKTNSSTGLEDRDEFSSSEGTGEKTEPNEDDGSIKSQEDDHPIIIKRRRGRPRKYPAETAFKSKEDSKTETDITTVEQSSPSGKLKVSQADESNKEIANLEEKSTSNDDSEEKTASMRLRGRKPKRSLTSSDDAESSEPERKRQKSVSETSEDKKDEESDEEEEEEEEEEPLGATTRSATRSEAQRKNHSKPSTRATSKLGIPETISPRNRQKLAKEKLSTSEKVSKSPPLGRSKAQLSPSVKRKREVSPPGARTRGQQKVDENPLKKAKR</sequence>